<gene>
    <name type="primary">dbp10</name>
    <name type="ORF">SPAC31A2.07c</name>
</gene>
<evidence type="ECO:0000250" key="1"/>
<evidence type="ECO:0000255" key="2">
    <source>
        <dbReference type="PROSITE-ProRule" id="PRU00541"/>
    </source>
</evidence>
<evidence type="ECO:0000255" key="3">
    <source>
        <dbReference type="PROSITE-ProRule" id="PRU00542"/>
    </source>
</evidence>
<evidence type="ECO:0000256" key="4">
    <source>
        <dbReference type="SAM" id="MobiDB-lite"/>
    </source>
</evidence>
<evidence type="ECO:0000269" key="5">
    <source>
    </source>
</evidence>
<evidence type="ECO:0000269" key="6">
    <source>
    </source>
</evidence>
<evidence type="ECO:0000269" key="7">
    <source>
    </source>
</evidence>
<evidence type="ECO:0000305" key="8"/>
<accession>Q09719</accession>
<accession>Q9USB9</accession>
<keyword id="KW-0067">ATP-binding</keyword>
<keyword id="KW-0347">Helicase</keyword>
<keyword id="KW-0378">Hydrolase</keyword>
<keyword id="KW-0547">Nucleotide-binding</keyword>
<keyword id="KW-0539">Nucleus</keyword>
<keyword id="KW-0597">Phosphoprotein</keyword>
<keyword id="KW-1185">Reference proteome</keyword>
<keyword id="KW-0690">Ribosome biogenesis</keyword>
<keyword id="KW-0694">RNA-binding</keyword>
<keyword id="KW-0698">rRNA processing</keyword>
<feature type="chain" id="PRO_0000055041" description="ATP-dependent RNA helicase dbp10">
    <location>
        <begin position="1"/>
        <end position="848"/>
    </location>
</feature>
<feature type="domain" description="Helicase ATP-binding" evidence="2">
    <location>
        <begin position="100"/>
        <end position="272"/>
    </location>
</feature>
<feature type="domain" description="Helicase C-terminal" evidence="3">
    <location>
        <begin position="330"/>
        <end position="480"/>
    </location>
</feature>
<feature type="region of interest" description="Disordered" evidence="4">
    <location>
        <begin position="22"/>
        <end position="43"/>
    </location>
</feature>
<feature type="region of interest" description="Disordered" evidence="4">
    <location>
        <begin position="610"/>
        <end position="650"/>
    </location>
</feature>
<feature type="region of interest" description="Disordered" evidence="4">
    <location>
        <begin position="768"/>
        <end position="813"/>
    </location>
</feature>
<feature type="short sequence motif" description="Q motif">
    <location>
        <begin position="69"/>
        <end position="97"/>
    </location>
</feature>
<feature type="short sequence motif" description="DEAD box">
    <location>
        <begin position="220"/>
        <end position="223"/>
    </location>
</feature>
<feature type="compositionally biased region" description="Basic and acidic residues" evidence="4">
    <location>
        <begin position="617"/>
        <end position="627"/>
    </location>
</feature>
<feature type="compositionally biased region" description="Polar residues" evidence="4">
    <location>
        <begin position="628"/>
        <end position="637"/>
    </location>
</feature>
<feature type="compositionally biased region" description="Basic and acidic residues" evidence="4">
    <location>
        <begin position="789"/>
        <end position="812"/>
    </location>
</feature>
<feature type="binding site" evidence="2">
    <location>
        <begin position="113"/>
        <end position="120"/>
    </location>
    <ligand>
        <name>ATP</name>
        <dbReference type="ChEBI" id="CHEBI:30616"/>
    </ligand>
</feature>
<feature type="modified residue" description="Phosphoserine" evidence="7">
    <location>
        <position position="638"/>
    </location>
</feature>
<feature type="modified residue" description="Phosphoserine" evidence="7">
    <location>
        <position position="733"/>
    </location>
</feature>
<feature type="modified residue" description="Phosphoserine" evidence="7">
    <location>
        <position position="736"/>
    </location>
</feature>
<reference key="1">
    <citation type="journal article" date="2002" name="Nature">
        <title>The genome sequence of Schizosaccharomyces pombe.</title>
        <authorList>
            <person name="Wood V."/>
            <person name="Gwilliam R."/>
            <person name="Rajandream M.A."/>
            <person name="Lyne M.H."/>
            <person name="Lyne R."/>
            <person name="Stewart A."/>
            <person name="Sgouros J.G."/>
            <person name="Peat N."/>
            <person name="Hayles J."/>
            <person name="Baker S.G."/>
            <person name="Basham D."/>
            <person name="Bowman S."/>
            <person name="Brooks K."/>
            <person name="Brown D."/>
            <person name="Brown S."/>
            <person name="Chillingworth T."/>
            <person name="Churcher C.M."/>
            <person name="Collins M."/>
            <person name="Connor R."/>
            <person name="Cronin A."/>
            <person name="Davis P."/>
            <person name="Feltwell T."/>
            <person name="Fraser A."/>
            <person name="Gentles S."/>
            <person name="Goble A."/>
            <person name="Hamlin N."/>
            <person name="Harris D.E."/>
            <person name="Hidalgo J."/>
            <person name="Hodgson G."/>
            <person name="Holroyd S."/>
            <person name="Hornsby T."/>
            <person name="Howarth S."/>
            <person name="Huckle E.J."/>
            <person name="Hunt S."/>
            <person name="Jagels K."/>
            <person name="James K.D."/>
            <person name="Jones L."/>
            <person name="Jones M."/>
            <person name="Leather S."/>
            <person name="McDonald S."/>
            <person name="McLean J."/>
            <person name="Mooney P."/>
            <person name="Moule S."/>
            <person name="Mungall K.L."/>
            <person name="Murphy L.D."/>
            <person name="Niblett D."/>
            <person name="Odell C."/>
            <person name="Oliver K."/>
            <person name="O'Neil S."/>
            <person name="Pearson D."/>
            <person name="Quail M.A."/>
            <person name="Rabbinowitsch E."/>
            <person name="Rutherford K.M."/>
            <person name="Rutter S."/>
            <person name="Saunders D."/>
            <person name="Seeger K."/>
            <person name="Sharp S."/>
            <person name="Skelton J."/>
            <person name="Simmonds M.N."/>
            <person name="Squares R."/>
            <person name="Squares S."/>
            <person name="Stevens K."/>
            <person name="Taylor K."/>
            <person name="Taylor R.G."/>
            <person name="Tivey A."/>
            <person name="Walsh S.V."/>
            <person name="Warren T."/>
            <person name="Whitehead S."/>
            <person name="Woodward J.R."/>
            <person name="Volckaert G."/>
            <person name="Aert R."/>
            <person name="Robben J."/>
            <person name="Grymonprez B."/>
            <person name="Weltjens I."/>
            <person name="Vanstreels E."/>
            <person name="Rieger M."/>
            <person name="Schaefer M."/>
            <person name="Mueller-Auer S."/>
            <person name="Gabel C."/>
            <person name="Fuchs M."/>
            <person name="Duesterhoeft A."/>
            <person name="Fritzc C."/>
            <person name="Holzer E."/>
            <person name="Moestl D."/>
            <person name="Hilbert H."/>
            <person name="Borzym K."/>
            <person name="Langer I."/>
            <person name="Beck A."/>
            <person name="Lehrach H."/>
            <person name="Reinhardt R."/>
            <person name="Pohl T.M."/>
            <person name="Eger P."/>
            <person name="Zimmermann W."/>
            <person name="Wedler H."/>
            <person name="Wambutt R."/>
            <person name="Purnelle B."/>
            <person name="Goffeau A."/>
            <person name="Cadieu E."/>
            <person name="Dreano S."/>
            <person name="Gloux S."/>
            <person name="Lelaure V."/>
            <person name="Mottier S."/>
            <person name="Galibert F."/>
            <person name="Aves S.J."/>
            <person name="Xiang Z."/>
            <person name="Hunt C."/>
            <person name="Moore K."/>
            <person name="Hurst S.M."/>
            <person name="Lucas M."/>
            <person name="Rochet M."/>
            <person name="Gaillardin C."/>
            <person name="Tallada V.A."/>
            <person name="Garzon A."/>
            <person name="Thode G."/>
            <person name="Daga R.R."/>
            <person name="Cruzado L."/>
            <person name="Jimenez J."/>
            <person name="Sanchez M."/>
            <person name="del Rey F."/>
            <person name="Benito J."/>
            <person name="Dominguez A."/>
            <person name="Revuelta J.L."/>
            <person name="Moreno S."/>
            <person name="Armstrong J."/>
            <person name="Forsburg S.L."/>
            <person name="Cerutti L."/>
            <person name="Lowe T."/>
            <person name="McCombie W.R."/>
            <person name="Paulsen I."/>
            <person name="Potashkin J."/>
            <person name="Shpakovski G.V."/>
            <person name="Ussery D."/>
            <person name="Barrell B.G."/>
            <person name="Nurse P."/>
        </authorList>
    </citation>
    <scope>NUCLEOTIDE SEQUENCE [LARGE SCALE GENOMIC DNA]</scope>
    <source>
        <strain>972 / ATCC 24843</strain>
    </source>
</reference>
<reference key="2">
    <citation type="journal article" date="2000" name="Genes Cells">
        <title>Large-scale screening of intracellular protein localization in living fission yeast cells by the use of a GFP-fusion genomic DNA library.</title>
        <authorList>
            <person name="Ding D.-Q."/>
            <person name="Tomita Y."/>
            <person name="Yamamoto A."/>
            <person name="Chikashige Y."/>
            <person name="Haraguchi T."/>
            <person name="Hiraoka Y."/>
        </authorList>
    </citation>
    <scope>NUCLEOTIDE SEQUENCE [LARGE SCALE GENOMIC DNA] OF 75-167</scope>
    <scope>SUBCELLULAR LOCATION</scope>
    <source>
        <strain>ATCC 38364 / 968</strain>
    </source>
</reference>
<reference key="3">
    <citation type="journal article" date="2006" name="Nat. Biotechnol.">
        <title>ORFeome cloning and global analysis of protein localization in the fission yeast Schizosaccharomyces pombe.</title>
        <authorList>
            <person name="Matsuyama A."/>
            <person name="Arai R."/>
            <person name="Yashiroda Y."/>
            <person name="Shirai A."/>
            <person name="Kamata A."/>
            <person name="Sekido S."/>
            <person name="Kobayashi Y."/>
            <person name="Hashimoto A."/>
            <person name="Hamamoto M."/>
            <person name="Hiraoka Y."/>
            <person name="Horinouchi S."/>
            <person name="Yoshida M."/>
        </authorList>
    </citation>
    <scope>SUBCELLULAR LOCATION [LARGE SCALE ANALYSIS]</scope>
</reference>
<reference key="4">
    <citation type="journal article" date="2008" name="J. Proteome Res.">
        <title>Phosphoproteome analysis of fission yeast.</title>
        <authorList>
            <person name="Wilson-Grady J.T."/>
            <person name="Villen J."/>
            <person name="Gygi S.P."/>
        </authorList>
    </citation>
    <scope>PHOSPHORYLATION [LARGE SCALE ANALYSIS] AT SER-638; SER-733 AND SER-736</scope>
    <scope>IDENTIFICATION BY MASS SPECTROMETRY</scope>
</reference>
<protein>
    <recommendedName>
        <fullName>ATP-dependent RNA helicase dbp10</fullName>
        <ecNumber>3.6.4.13</ecNumber>
    </recommendedName>
</protein>
<sequence length="848" mass="94661">MSGFQTSDEVDISNSLKAFPVDIATDNQKDKHENVGENVSDEDDGNYIASKLLESNRRTKGKKGNGKASNFQSMGLNQTLLRAIFKKGFKAPTPIQRKTIPLLLEGRDVVGMARTGSGKTAAFVIPMIEHLKSTLANSNTRALILSPNRELALQTVKVVKDFSKGTDLRSVAIVGGVSLEEQFSLLSGKPDIVVATPGRFLHLKVEMKLELSSIEYVVFDEADRLFEMGFAAQLTEILHALPTSRQTLLFSATLPRTLVDFAKAGLQDPVLVRLDVESKVSADLQSAFFSVKTAEREAALLCILQDIIKLPLKDNVRPREIGNVNNPKKRKRALELALKGSESGSPDSTLVFVPTKHHVEYVSELLVQAGYSVSKIYGSLDQEARLNEINNFRLGKTNLLVVTDVASRGIDIPLLANVINYDFPPQPKVFVHRVGRTARAGRTGWAYSLVRAEDAGYLLDLQLFLNRPLVTSSKQVKTDSDCDFTKQIVLGSLPQELVAELLEWVQRIVSRDVELQQLSNVAARGEKLYFRTRATCSAESAKRAKELVDSKGWSSNNPLFGDVSVIEAEEKYAELLSKVSSYRPSETVFEIGQRGHLKTEAAEIMRKRRNKVKPKGIKSEVASDKITDSSPGNMSEASESELEEVFKNPKELSKKKTTDFKDKEYYMSHYAPKESIQETGYAINSGENFTTAARHAILDLTNDEGIEQSRKGGQRWDPKKKKFVNIINDEDGSKGSPKIIRGESGVKLPATYRSGRFDEWKASKAFGANDSPIRENKRYKHNKLQTPKPADKFRDNYHKQNKRNREAKERGIGIKVNSELKSAVEIRKARELKEKRLAKNNRPSKKHR</sequence>
<dbReference type="EC" id="3.6.4.13"/>
<dbReference type="EMBL" id="CU329670">
    <property type="protein sequence ID" value="CAA90465.1"/>
    <property type="molecule type" value="Genomic_DNA"/>
</dbReference>
<dbReference type="EMBL" id="AB027882">
    <property type="protein sequence ID" value="BAA87186.1"/>
    <property type="molecule type" value="Genomic_DNA"/>
</dbReference>
<dbReference type="PIR" id="S59645">
    <property type="entry name" value="S59645"/>
</dbReference>
<dbReference type="RefSeq" id="NP_592919.1">
    <property type="nucleotide sequence ID" value="NM_001018320.2"/>
</dbReference>
<dbReference type="SMR" id="Q09719"/>
<dbReference type="BioGRID" id="279626">
    <property type="interactions" value="5"/>
</dbReference>
<dbReference type="FunCoup" id="Q09719">
    <property type="interactions" value="833"/>
</dbReference>
<dbReference type="STRING" id="284812.Q09719"/>
<dbReference type="iPTMnet" id="Q09719"/>
<dbReference type="PaxDb" id="4896-SPAC31A2.07c.1"/>
<dbReference type="EnsemblFungi" id="SPAC31A2.07c.1">
    <property type="protein sequence ID" value="SPAC31A2.07c.1:pep"/>
    <property type="gene ID" value="SPAC31A2.07c"/>
</dbReference>
<dbReference type="GeneID" id="2543197"/>
<dbReference type="KEGG" id="spo:2543197"/>
<dbReference type="PomBase" id="SPAC31A2.07c">
    <property type="gene designation" value="dbp10"/>
</dbReference>
<dbReference type="VEuPathDB" id="FungiDB:SPAC31A2.07c"/>
<dbReference type="eggNOG" id="KOG0337">
    <property type="taxonomic scope" value="Eukaryota"/>
</dbReference>
<dbReference type="HOGENOM" id="CLU_003041_5_1_1"/>
<dbReference type="InParanoid" id="Q09719"/>
<dbReference type="OMA" id="EDQFGMM"/>
<dbReference type="PhylomeDB" id="Q09719"/>
<dbReference type="PRO" id="PR:Q09719"/>
<dbReference type="Proteomes" id="UP000002485">
    <property type="component" value="Chromosome I"/>
</dbReference>
<dbReference type="GO" id="GO:0005730">
    <property type="term" value="C:nucleolus"/>
    <property type="evidence" value="ECO:0007005"/>
    <property type="project" value="PomBase"/>
</dbReference>
<dbReference type="GO" id="GO:0005634">
    <property type="term" value="C:nucleus"/>
    <property type="evidence" value="ECO:0007005"/>
    <property type="project" value="PomBase"/>
</dbReference>
<dbReference type="GO" id="GO:0005524">
    <property type="term" value="F:ATP binding"/>
    <property type="evidence" value="ECO:0007669"/>
    <property type="project" value="UniProtKB-KW"/>
</dbReference>
<dbReference type="GO" id="GO:0016887">
    <property type="term" value="F:ATP hydrolysis activity"/>
    <property type="evidence" value="ECO:0007669"/>
    <property type="project" value="RHEA"/>
</dbReference>
<dbReference type="GO" id="GO:0003723">
    <property type="term" value="F:RNA binding"/>
    <property type="evidence" value="ECO:0007669"/>
    <property type="project" value="UniProtKB-KW"/>
</dbReference>
<dbReference type="GO" id="GO:0003724">
    <property type="term" value="F:RNA helicase activity"/>
    <property type="evidence" value="ECO:0000266"/>
    <property type="project" value="PomBase"/>
</dbReference>
<dbReference type="GO" id="GO:0006364">
    <property type="term" value="P:rRNA processing"/>
    <property type="evidence" value="ECO:0000318"/>
    <property type="project" value="GO_Central"/>
</dbReference>
<dbReference type="CDD" id="cd17959">
    <property type="entry name" value="DEADc_DDX54"/>
    <property type="match status" value="1"/>
</dbReference>
<dbReference type="CDD" id="cd18787">
    <property type="entry name" value="SF2_C_DEAD"/>
    <property type="match status" value="1"/>
</dbReference>
<dbReference type="FunFam" id="3.40.50.300:FF:000865">
    <property type="entry name" value="ATP-dependent RNA helicase DDX54"/>
    <property type="match status" value="1"/>
</dbReference>
<dbReference type="Gene3D" id="3.40.50.300">
    <property type="entry name" value="P-loop containing nucleotide triphosphate hydrolases"/>
    <property type="match status" value="2"/>
</dbReference>
<dbReference type="InterPro" id="IPR012541">
    <property type="entry name" value="DBP10_C"/>
</dbReference>
<dbReference type="InterPro" id="IPR033517">
    <property type="entry name" value="DDX54/DBP10_DEAD-box_helicase"/>
</dbReference>
<dbReference type="InterPro" id="IPR011545">
    <property type="entry name" value="DEAD/DEAH_box_helicase_dom"/>
</dbReference>
<dbReference type="InterPro" id="IPR050079">
    <property type="entry name" value="DEAD_box_RNA_helicase"/>
</dbReference>
<dbReference type="InterPro" id="IPR014001">
    <property type="entry name" value="Helicase_ATP-bd"/>
</dbReference>
<dbReference type="InterPro" id="IPR001650">
    <property type="entry name" value="Helicase_C-like"/>
</dbReference>
<dbReference type="InterPro" id="IPR027417">
    <property type="entry name" value="P-loop_NTPase"/>
</dbReference>
<dbReference type="InterPro" id="IPR000629">
    <property type="entry name" value="RNA-helicase_DEAD-box_CS"/>
</dbReference>
<dbReference type="InterPro" id="IPR014014">
    <property type="entry name" value="RNA_helicase_DEAD_Q_motif"/>
</dbReference>
<dbReference type="PANTHER" id="PTHR47959">
    <property type="entry name" value="ATP-DEPENDENT RNA HELICASE RHLE-RELATED"/>
    <property type="match status" value="1"/>
</dbReference>
<dbReference type="PANTHER" id="PTHR47959:SF8">
    <property type="entry name" value="RNA HELICASE"/>
    <property type="match status" value="1"/>
</dbReference>
<dbReference type="Pfam" id="PF08147">
    <property type="entry name" value="DBP10CT"/>
    <property type="match status" value="1"/>
</dbReference>
<dbReference type="Pfam" id="PF00270">
    <property type="entry name" value="DEAD"/>
    <property type="match status" value="1"/>
</dbReference>
<dbReference type="Pfam" id="PF00271">
    <property type="entry name" value="Helicase_C"/>
    <property type="match status" value="1"/>
</dbReference>
<dbReference type="SMART" id="SM01123">
    <property type="entry name" value="DBP10CT"/>
    <property type="match status" value="1"/>
</dbReference>
<dbReference type="SMART" id="SM00487">
    <property type="entry name" value="DEXDc"/>
    <property type="match status" value="1"/>
</dbReference>
<dbReference type="SMART" id="SM00490">
    <property type="entry name" value="HELICc"/>
    <property type="match status" value="1"/>
</dbReference>
<dbReference type="SUPFAM" id="SSF52540">
    <property type="entry name" value="P-loop containing nucleoside triphosphate hydrolases"/>
    <property type="match status" value="2"/>
</dbReference>
<dbReference type="PROSITE" id="PS00039">
    <property type="entry name" value="DEAD_ATP_HELICASE"/>
    <property type="match status" value="1"/>
</dbReference>
<dbReference type="PROSITE" id="PS51192">
    <property type="entry name" value="HELICASE_ATP_BIND_1"/>
    <property type="match status" value="1"/>
</dbReference>
<dbReference type="PROSITE" id="PS51194">
    <property type="entry name" value="HELICASE_CTER"/>
    <property type="match status" value="1"/>
</dbReference>
<dbReference type="PROSITE" id="PS51195">
    <property type="entry name" value="Q_MOTIF"/>
    <property type="match status" value="1"/>
</dbReference>
<comment type="function">
    <text evidence="1">ATP-binding RNA helicase involved in the biogenesis of 60S ribosomal subunits and is required for the normal formation of 25S and 5.8S rRNAs.</text>
</comment>
<comment type="catalytic activity">
    <reaction>
        <text>ATP + H2O = ADP + phosphate + H(+)</text>
        <dbReference type="Rhea" id="RHEA:13065"/>
        <dbReference type="ChEBI" id="CHEBI:15377"/>
        <dbReference type="ChEBI" id="CHEBI:15378"/>
        <dbReference type="ChEBI" id="CHEBI:30616"/>
        <dbReference type="ChEBI" id="CHEBI:43474"/>
        <dbReference type="ChEBI" id="CHEBI:456216"/>
        <dbReference type="EC" id="3.6.4.13"/>
    </reaction>
</comment>
<comment type="subcellular location">
    <subcellularLocation>
        <location evidence="5 6">Nucleus</location>
        <location evidence="5 6">Nucleolus</location>
    </subcellularLocation>
</comment>
<comment type="domain">
    <text>The Q motif is unique to and characteristic of the DEAD box family of RNA helicases and controls ATP binding and hydrolysis.</text>
</comment>
<comment type="similarity">
    <text evidence="8">Belongs to the DEAD box helicase family. DDX54/DBP10 subfamily.</text>
</comment>
<proteinExistence type="evidence at protein level"/>
<organism>
    <name type="scientific">Schizosaccharomyces pombe (strain 972 / ATCC 24843)</name>
    <name type="common">Fission yeast</name>
    <dbReference type="NCBI Taxonomy" id="284812"/>
    <lineage>
        <taxon>Eukaryota</taxon>
        <taxon>Fungi</taxon>
        <taxon>Dikarya</taxon>
        <taxon>Ascomycota</taxon>
        <taxon>Taphrinomycotina</taxon>
        <taxon>Schizosaccharomycetes</taxon>
        <taxon>Schizosaccharomycetales</taxon>
        <taxon>Schizosaccharomycetaceae</taxon>
        <taxon>Schizosaccharomyces</taxon>
    </lineage>
</organism>
<name>DBP10_SCHPO</name>